<gene>
    <name type="ordered locus">Rv0940c</name>
    <name type="ORF">MTCY10D7.34</name>
</gene>
<organism>
    <name type="scientific">Mycobacterium tuberculosis (strain ATCC 25618 / H37Rv)</name>
    <dbReference type="NCBI Taxonomy" id="83332"/>
    <lineage>
        <taxon>Bacteria</taxon>
        <taxon>Bacillati</taxon>
        <taxon>Actinomycetota</taxon>
        <taxon>Actinomycetes</taxon>
        <taxon>Mycobacteriales</taxon>
        <taxon>Mycobacteriaceae</taxon>
        <taxon>Mycobacterium</taxon>
        <taxon>Mycobacterium tuberculosis complex</taxon>
    </lineage>
</organism>
<sequence length="288" mass="31789">MRFSYAEAMTDFTFYIPLAKAAEAAGYSSMTIPDSIAYPFESDSKYPYTPDGNREFMDGKPFIETFVLTAALGAVTTRLRFNFFVLKLPIRPPALVAKQAGSLAALIGNRVGLGVGTSPWPEDYELMGVPFAKRGKRIDECIEIVRGLTTGDYFEFHGEFYDIPKTKMTPAPTQPIPILVGGHADAALRRAARADGWMHGGGDPDELDRLIARVKRLREEAGKTSPFEIHVISLDGFTVDGVKRLEDKGVTDVIVGFRVPYTMGPDTEPLQTKIRNLEMFAENVIAKV</sequence>
<name>Y940_MYCTU</name>
<reference key="1">
    <citation type="journal article" date="1998" name="Nature">
        <title>Deciphering the biology of Mycobacterium tuberculosis from the complete genome sequence.</title>
        <authorList>
            <person name="Cole S.T."/>
            <person name="Brosch R."/>
            <person name="Parkhill J."/>
            <person name="Garnier T."/>
            <person name="Churcher C.M."/>
            <person name="Harris D.E."/>
            <person name="Gordon S.V."/>
            <person name="Eiglmeier K."/>
            <person name="Gas S."/>
            <person name="Barry C.E. III"/>
            <person name="Tekaia F."/>
            <person name="Badcock K."/>
            <person name="Basham D."/>
            <person name="Brown D."/>
            <person name="Chillingworth T."/>
            <person name="Connor R."/>
            <person name="Davies R.M."/>
            <person name="Devlin K."/>
            <person name="Feltwell T."/>
            <person name="Gentles S."/>
            <person name="Hamlin N."/>
            <person name="Holroyd S."/>
            <person name="Hornsby T."/>
            <person name="Jagels K."/>
            <person name="Krogh A."/>
            <person name="McLean J."/>
            <person name="Moule S."/>
            <person name="Murphy L.D."/>
            <person name="Oliver S."/>
            <person name="Osborne J."/>
            <person name="Quail M.A."/>
            <person name="Rajandream M.A."/>
            <person name="Rogers J."/>
            <person name="Rutter S."/>
            <person name="Seeger K."/>
            <person name="Skelton S."/>
            <person name="Squares S."/>
            <person name="Squares R."/>
            <person name="Sulston J.E."/>
            <person name="Taylor K."/>
            <person name="Whitehead S."/>
            <person name="Barrell B.G."/>
        </authorList>
    </citation>
    <scope>NUCLEOTIDE SEQUENCE [LARGE SCALE GENOMIC DNA]</scope>
    <source>
        <strain>ATCC 25618 / H37Rv</strain>
    </source>
</reference>
<reference key="2">
    <citation type="journal article" date="2011" name="Mol. Cell. Proteomics">
        <title>Proteogenomic analysis of Mycobacterium tuberculosis by high resolution mass spectrometry.</title>
        <authorList>
            <person name="Kelkar D.S."/>
            <person name="Kumar D."/>
            <person name="Kumar P."/>
            <person name="Balakrishnan L."/>
            <person name="Muthusamy B."/>
            <person name="Yadav A.K."/>
            <person name="Shrivastava P."/>
            <person name="Marimuthu A."/>
            <person name="Anand S."/>
            <person name="Sundaram H."/>
            <person name="Kingsbury R."/>
            <person name="Harsha H.C."/>
            <person name="Nair B."/>
            <person name="Prasad T.S."/>
            <person name="Chauhan D.S."/>
            <person name="Katoch K."/>
            <person name="Katoch V.M."/>
            <person name="Kumar P."/>
            <person name="Chaerkady R."/>
            <person name="Ramachandran S."/>
            <person name="Dash D."/>
            <person name="Pandey A."/>
        </authorList>
    </citation>
    <scope>IDENTIFICATION BY MASS SPECTROMETRY [LARGE SCALE ANALYSIS]</scope>
    <source>
        <strain>ATCC 25618 / H37Rv</strain>
    </source>
</reference>
<accession>P9WKP1</accession>
<accession>L0T7Z0</accession>
<accession>P64761</accession>
<accession>P71569</accession>
<keyword id="KW-1185">Reference proteome</keyword>
<protein>
    <recommendedName>
        <fullName>Uncharacterized protein Rv0940c</fullName>
    </recommendedName>
</protein>
<dbReference type="EMBL" id="AL123456">
    <property type="protein sequence ID" value="CCP43688.1"/>
    <property type="molecule type" value="Genomic_DNA"/>
</dbReference>
<dbReference type="PIR" id="B70715">
    <property type="entry name" value="B70715"/>
</dbReference>
<dbReference type="RefSeq" id="NP_215455.1">
    <property type="nucleotide sequence ID" value="NC_000962.3"/>
</dbReference>
<dbReference type="RefSeq" id="WP_003404819.1">
    <property type="nucleotide sequence ID" value="NZ_NVQJ01000001.1"/>
</dbReference>
<dbReference type="SMR" id="P9WKP1"/>
<dbReference type="STRING" id="83332.Rv0940c"/>
<dbReference type="PaxDb" id="83332-Rv0940c"/>
<dbReference type="DNASU" id="885412"/>
<dbReference type="GeneID" id="885412"/>
<dbReference type="KEGG" id="mtu:Rv0940c"/>
<dbReference type="KEGG" id="mtv:RVBD_0940c"/>
<dbReference type="TubercuList" id="Rv0940c"/>
<dbReference type="eggNOG" id="COG2141">
    <property type="taxonomic scope" value="Bacteria"/>
</dbReference>
<dbReference type="InParanoid" id="P9WKP1"/>
<dbReference type="OrthoDB" id="9781803at2"/>
<dbReference type="PhylomeDB" id="P9WKP1"/>
<dbReference type="Proteomes" id="UP000001584">
    <property type="component" value="Chromosome"/>
</dbReference>
<dbReference type="GO" id="GO:0005886">
    <property type="term" value="C:plasma membrane"/>
    <property type="evidence" value="ECO:0007005"/>
    <property type="project" value="MTBBASE"/>
</dbReference>
<dbReference type="GO" id="GO:0016705">
    <property type="term" value="F:oxidoreductase activity, acting on paired donors, with incorporation or reduction of molecular oxygen"/>
    <property type="evidence" value="ECO:0007669"/>
    <property type="project" value="InterPro"/>
</dbReference>
<dbReference type="FunFam" id="3.20.20.30:FF:000014">
    <property type="entry name" value="LLM class F420-dependent oxidoreductase"/>
    <property type="match status" value="1"/>
</dbReference>
<dbReference type="Gene3D" id="3.20.20.30">
    <property type="entry name" value="Luciferase-like domain"/>
    <property type="match status" value="1"/>
</dbReference>
<dbReference type="InterPro" id="IPR051260">
    <property type="entry name" value="Diverse_substr_monoxygenases"/>
</dbReference>
<dbReference type="InterPro" id="IPR019921">
    <property type="entry name" value="Lucif-like_OxRdtase_Rv2161c"/>
</dbReference>
<dbReference type="InterPro" id="IPR011251">
    <property type="entry name" value="Luciferase-like_dom"/>
</dbReference>
<dbReference type="InterPro" id="IPR036661">
    <property type="entry name" value="Luciferase-like_sf"/>
</dbReference>
<dbReference type="NCBIfam" id="TIGR03619">
    <property type="entry name" value="F420_Rv2161c"/>
    <property type="match status" value="1"/>
</dbReference>
<dbReference type="PANTHER" id="PTHR30011">
    <property type="entry name" value="ALKANESULFONATE MONOOXYGENASE-RELATED"/>
    <property type="match status" value="1"/>
</dbReference>
<dbReference type="PANTHER" id="PTHR30011:SF32">
    <property type="entry name" value="CONSERVED PROTEIN"/>
    <property type="match status" value="1"/>
</dbReference>
<dbReference type="Pfam" id="PF00296">
    <property type="entry name" value="Bac_luciferase"/>
    <property type="match status" value="1"/>
</dbReference>
<dbReference type="SUPFAM" id="SSF51679">
    <property type="entry name" value="Bacterial luciferase-like"/>
    <property type="match status" value="1"/>
</dbReference>
<proteinExistence type="evidence at protein level"/>
<feature type="chain" id="PRO_0000103743" description="Uncharacterized protein Rv0940c">
    <location>
        <begin position="1"/>
        <end position="288"/>
    </location>
</feature>